<dbReference type="EMBL" id="U37587">
    <property type="protein sequence ID" value="AAC49120.1"/>
    <property type="molecule type" value="mRNA"/>
</dbReference>
<dbReference type="EMBL" id="AC015985">
    <property type="protein sequence ID" value="AAF23260.1"/>
    <property type="molecule type" value="Genomic_DNA"/>
</dbReference>
<dbReference type="EMBL" id="CP002686">
    <property type="protein sequence ID" value="AEE74820.1"/>
    <property type="molecule type" value="Genomic_DNA"/>
</dbReference>
<dbReference type="EMBL" id="AY065076">
    <property type="protein sequence ID" value="AAL38252.1"/>
    <property type="molecule type" value="mRNA"/>
</dbReference>
<dbReference type="EMBL" id="AY094434">
    <property type="protein sequence ID" value="AAM19807.1"/>
    <property type="molecule type" value="mRNA"/>
</dbReference>
<dbReference type="PIR" id="S60112">
    <property type="entry name" value="S60112"/>
</dbReference>
<dbReference type="RefSeq" id="NP_187595.1">
    <property type="nucleotide sequence ID" value="NM_111819.5"/>
</dbReference>
<dbReference type="PDB" id="6HD3">
    <property type="method" value="X-ray"/>
    <property type="resolution" value="2.80 A"/>
    <property type="chains" value="A/C=1-481"/>
</dbReference>
<dbReference type="PDBsum" id="6HD3"/>
<dbReference type="SMR" id="P54609"/>
<dbReference type="BioGRID" id="5476">
    <property type="interactions" value="79"/>
</dbReference>
<dbReference type="FunCoup" id="P54609">
    <property type="interactions" value="3957"/>
</dbReference>
<dbReference type="IntAct" id="P54609">
    <property type="interactions" value="4"/>
</dbReference>
<dbReference type="STRING" id="3702.P54609"/>
<dbReference type="TCDB" id="3.A.16.1.5">
    <property type="family name" value="the endoplasmic reticular retrotranslocon (er-rt) family"/>
</dbReference>
<dbReference type="iPTMnet" id="P54609"/>
<dbReference type="MetOSite" id="P54609"/>
<dbReference type="SwissPalm" id="P54609"/>
<dbReference type="PaxDb" id="3702-AT3G09840.1"/>
<dbReference type="ProteomicsDB" id="223907"/>
<dbReference type="EnsemblPlants" id="AT3G09840.1">
    <property type="protein sequence ID" value="AT3G09840.1"/>
    <property type="gene ID" value="AT3G09840"/>
</dbReference>
<dbReference type="GeneID" id="820142"/>
<dbReference type="Gramene" id="AT3G09840.1">
    <property type="protein sequence ID" value="AT3G09840.1"/>
    <property type="gene ID" value="AT3G09840"/>
</dbReference>
<dbReference type="KEGG" id="ath:AT3G09840"/>
<dbReference type="Araport" id="AT3G09840"/>
<dbReference type="TAIR" id="AT3G09840">
    <property type="gene designation" value="CDC48A"/>
</dbReference>
<dbReference type="eggNOG" id="KOG0730">
    <property type="taxonomic scope" value="Eukaryota"/>
</dbReference>
<dbReference type="HOGENOM" id="CLU_000688_12_0_1"/>
<dbReference type="InParanoid" id="P54609"/>
<dbReference type="OMA" id="VEMRHFR"/>
<dbReference type="OrthoDB" id="1051988at2759"/>
<dbReference type="PhylomeDB" id="P54609"/>
<dbReference type="CD-CODE" id="4299E36E">
    <property type="entry name" value="Nucleolus"/>
</dbReference>
<dbReference type="PRO" id="PR:P54609"/>
<dbReference type="Proteomes" id="UP000006548">
    <property type="component" value="Chromosome 3"/>
</dbReference>
<dbReference type="ExpressionAtlas" id="P54609">
    <property type="expression patterns" value="baseline and differential"/>
</dbReference>
<dbReference type="GO" id="GO:0005737">
    <property type="term" value="C:cytoplasm"/>
    <property type="evidence" value="ECO:0000314"/>
    <property type="project" value="TAIR"/>
</dbReference>
<dbReference type="GO" id="GO:0005829">
    <property type="term" value="C:cytosol"/>
    <property type="evidence" value="ECO:0007005"/>
    <property type="project" value="TAIR"/>
</dbReference>
<dbReference type="GO" id="GO:0022626">
    <property type="term" value="C:cytosolic ribosome"/>
    <property type="evidence" value="ECO:0007005"/>
    <property type="project" value="TAIR"/>
</dbReference>
<dbReference type="GO" id="GO:0005794">
    <property type="term" value="C:Golgi apparatus"/>
    <property type="evidence" value="ECO:0007005"/>
    <property type="project" value="TAIR"/>
</dbReference>
<dbReference type="GO" id="GO:0005811">
    <property type="term" value="C:lipid droplet"/>
    <property type="evidence" value="ECO:0000314"/>
    <property type="project" value="TAIR"/>
</dbReference>
<dbReference type="GO" id="GO:0005635">
    <property type="term" value="C:nuclear envelope"/>
    <property type="evidence" value="ECO:0000314"/>
    <property type="project" value="TAIR"/>
</dbReference>
<dbReference type="GO" id="GO:0005730">
    <property type="term" value="C:nucleolus"/>
    <property type="evidence" value="ECO:0000314"/>
    <property type="project" value="TAIR"/>
</dbReference>
<dbReference type="GO" id="GO:0005634">
    <property type="term" value="C:nucleus"/>
    <property type="evidence" value="ECO:0000314"/>
    <property type="project" value="TAIR"/>
</dbReference>
<dbReference type="GO" id="GO:0009524">
    <property type="term" value="C:phragmoplast"/>
    <property type="evidence" value="ECO:0000314"/>
    <property type="project" value="TAIR"/>
</dbReference>
<dbReference type="GO" id="GO:0009505">
    <property type="term" value="C:plant-type cell wall"/>
    <property type="evidence" value="ECO:0007005"/>
    <property type="project" value="TAIR"/>
</dbReference>
<dbReference type="GO" id="GO:0005886">
    <property type="term" value="C:plasma membrane"/>
    <property type="evidence" value="ECO:0007005"/>
    <property type="project" value="TAIR"/>
</dbReference>
<dbReference type="GO" id="GO:0009506">
    <property type="term" value="C:plasmodesma"/>
    <property type="evidence" value="ECO:0007005"/>
    <property type="project" value="TAIR"/>
</dbReference>
<dbReference type="GO" id="GO:0005819">
    <property type="term" value="C:spindle"/>
    <property type="evidence" value="ECO:0000314"/>
    <property type="project" value="TAIR"/>
</dbReference>
<dbReference type="GO" id="GO:0005524">
    <property type="term" value="F:ATP binding"/>
    <property type="evidence" value="ECO:0007669"/>
    <property type="project" value="UniProtKB-KW"/>
</dbReference>
<dbReference type="GO" id="GO:0016887">
    <property type="term" value="F:ATP hydrolysis activity"/>
    <property type="evidence" value="ECO:0007669"/>
    <property type="project" value="InterPro"/>
</dbReference>
<dbReference type="GO" id="GO:0042802">
    <property type="term" value="F:identical protein binding"/>
    <property type="evidence" value="ECO:0000353"/>
    <property type="project" value="IntAct"/>
</dbReference>
<dbReference type="GO" id="GO:0051301">
    <property type="term" value="P:cell division"/>
    <property type="evidence" value="ECO:0000315"/>
    <property type="project" value="TAIR"/>
</dbReference>
<dbReference type="GO" id="GO:0031348">
    <property type="term" value="P:negative regulation of defense response"/>
    <property type="evidence" value="ECO:0000315"/>
    <property type="project" value="TAIR"/>
</dbReference>
<dbReference type="GO" id="GO:0009846">
    <property type="term" value="P:pollen germination"/>
    <property type="evidence" value="ECO:0000315"/>
    <property type="project" value="TAIR"/>
</dbReference>
<dbReference type="GO" id="GO:0009860">
    <property type="term" value="P:pollen tube growth"/>
    <property type="evidence" value="ECO:0000315"/>
    <property type="project" value="TAIR"/>
</dbReference>
<dbReference type="GO" id="GO:0031648">
    <property type="term" value="P:protein destabilization"/>
    <property type="evidence" value="ECO:0000315"/>
    <property type="project" value="TAIR"/>
</dbReference>
<dbReference type="GO" id="GO:0015031">
    <property type="term" value="P:protein transport"/>
    <property type="evidence" value="ECO:0007669"/>
    <property type="project" value="UniProtKB-KW"/>
</dbReference>
<dbReference type="CDD" id="cd19519">
    <property type="entry name" value="RecA-like_CDC48_r1-like"/>
    <property type="match status" value="1"/>
</dbReference>
<dbReference type="CDD" id="cd19528">
    <property type="entry name" value="RecA-like_CDC48_r2-like"/>
    <property type="match status" value="1"/>
</dbReference>
<dbReference type="FunFam" id="1.10.8.60:FF:000004">
    <property type="entry name" value="Cell division control 48"/>
    <property type="match status" value="1"/>
</dbReference>
<dbReference type="FunFam" id="3.10.330.10:FF:000001">
    <property type="entry name" value="Cell division control 48"/>
    <property type="match status" value="1"/>
</dbReference>
<dbReference type="FunFam" id="2.40.40.20:FF:000003">
    <property type="entry name" value="Transitional endoplasmic reticulum ATPase"/>
    <property type="match status" value="1"/>
</dbReference>
<dbReference type="FunFam" id="3.40.50.300:FF:000012">
    <property type="entry name" value="Transitional endoplasmic reticulum ATPase"/>
    <property type="match status" value="1"/>
</dbReference>
<dbReference type="FunFam" id="3.40.50.300:FF:000048">
    <property type="entry name" value="Transitional endoplasmic reticulum ATPase"/>
    <property type="match status" value="1"/>
</dbReference>
<dbReference type="Gene3D" id="1.10.8.60">
    <property type="match status" value="1"/>
</dbReference>
<dbReference type="Gene3D" id="2.40.40.20">
    <property type="match status" value="1"/>
</dbReference>
<dbReference type="Gene3D" id="3.10.330.10">
    <property type="match status" value="1"/>
</dbReference>
<dbReference type="Gene3D" id="6.10.20.150">
    <property type="match status" value="1"/>
</dbReference>
<dbReference type="Gene3D" id="3.40.50.300">
    <property type="entry name" value="P-loop containing nucleotide triphosphate hydrolases"/>
    <property type="match status" value="2"/>
</dbReference>
<dbReference type="InterPro" id="IPR003593">
    <property type="entry name" value="AAA+_ATPase"/>
</dbReference>
<dbReference type="InterPro" id="IPR005938">
    <property type="entry name" value="AAA_ATPase_CDC48"/>
</dbReference>
<dbReference type="InterPro" id="IPR050168">
    <property type="entry name" value="AAA_ATPase_domain"/>
</dbReference>
<dbReference type="InterPro" id="IPR041569">
    <property type="entry name" value="AAA_lid_3"/>
</dbReference>
<dbReference type="InterPro" id="IPR009010">
    <property type="entry name" value="Asp_de-COase-like_dom_sf"/>
</dbReference>
<dbReference type="InterPro" id="IPR003959">
    <property type="entry name" value="ATPase_AAA_core"/>
</dbReference>
<dbReference type="InterPro" id="IPR003960">
    <property type="entry name" value="ATPase_AAA_CS"/>
</dbReference>
<dbReference type="InterPro" id="IPR004201">
    <property type="entry name" value="Cdc48_dom2"/>
</dbReference>
<dbReference type="InterPro" id="IPR029067">
    <property type="entry name" value="CDC48_domain_2-like_sf"/>
</dbReference>
<dbReference type="InterPro" id="IPR003338">
    <property type="entry name" value="CDC4_N-term_subdom"/>
</dbReference>
<dbReference type="InterPro" id="IPR027417">
    <property type="entry name" value="P-loop_NTPase"/>
</dbReference>
<dbReference type="NCBIfam" id="TIGR01243">
    <property type="entry name" value="CDC48"/>
    <property type="match status" value="1"/>
</dbReference>
<dbReference type="PANTHER" id="PTHR23077">
    <property type="entry name" value="AAA-FAMILY ATPASE"/>
    <property type="match status" value="1"/>
</dbReference>
<dbReference type="PANTHER" id="PTHR23077:SF138">
    <property type="entry name" value="CELL DIVISION CONTROL PROTEIN 48 HOMOLOG A"/>
    <property type="match status" value="1"/>
</dbReference>
<dbReference type="Pfam" id="PF00004">
    <property type="entry name" value="AAA"/>
    <property type="match status" value="2"/>
</dbReference>
<dbReference type="Pfam" id="PF17862">
    <property type="entry name" value="AAA_lid_3"/>
    <property type="match status" value="2"/>
</dbReference>
<dbReference type="Pfam" id="PF02933">
    <property type="entry name" value="CDC48_2"/>
    <property type="match status" value="1"/>
</dbReference>
<dbReference type="Pfam" id="PF02359">
    <property type="entry name" value="CDC48_N"/>
    <property type="match status" value="1"/>
</dbReference>
<dbReference type="SMART" id="SM00382">
    <property type="entry name" value="AAA"/>
    <property type="match status" value="2"/>
</dbReference>
<dbReference type="SMART" id="SM01072">
    <property type="entry name" value="CDC48_2"/>
    <property type="match status" value="1"/>
</dbReference>
<dbReference type="SMART" id="SM01073">
    <property type="entry name" value="CDC48_N"/>
    <property type="match status" value="1"/>
</dbReference>
<dbReference type="SUPFAM" id="SSF50692">
    <property type="entry name" value="ADC-like"/>
    <property type="match status" value="1"/>
</dbReference>
<dbReference type="SUPFAM" id="SSF54585">
    <property type="entry name" value="Cdc48 domain 2-like"/>
    <property type="match status" value="1"/>
</dbReference>
<dbReference type="SUPFAM" id="SSF52540">
    <property type="entry name" value="P-loop containing nucleoside triphosphate hydrolases"/>
    <property type="match status" value="2"/>
</dbReference>
<dbReference type="PROSITE" id="PS00674">
    <property type="entry name" value="AAA"/>
    <property type="match status" value="2"/>
</dbReference>
<feature type="initiator methionine" description="Removed" evidence="14">
    <location>
        <position position="1"/>
    </location>
</feature>
<feature type="chain" id="PRO_0000084579" description="Cell division control protein 48 homolog A">
    <location>
        <begin position="2"/>
        <end position="809"/>
    </location>
</feature>
<feature type="region of interest" description="Disordered" evidence="2">
    <location>
        <begin position="782"/>
        <end position="809"/>
    </location>
</feature>
<feature type="compositionally biased region" description="Low complexity" evidence="2">
    <location>
        <begin position="791"/>
        <end position="801"/>
    </location>
</feature>
<feature type="binding site" evidence="10 13">
    <location>
        <position position="210"/>
    </location>
    <ligand>
        <name>ADP</name>
        <dbReference type="ChEBI" id="CHEBI:456216"/>
    </ligand>
</feature>
<feature type="binding site" evidence="10 13">
    <location>
        <begin position="248"/>
        <end position="256"/>
    </location>
    <ligand>
        <name>ADP</name>
        <dbReference type="ChEBI" id="CHEBI:456216"/>
    </ligand>
</feature>
<feature type="binding site" evidence="10 13">
    <location>
        <position position="387"/>
    </location>
    <ligand>
        <name>ADP</name>
        <dbReference type="ChEBI" id="CHEBI:456216"/>
    </ligand>
</feature>
<feature type="binding site" evidence="12">
    <location>
        <begin position="521"/>
        <end position="529"/>
    </location>
    <ligand>
        <name>ATP</name>
        <dbReference type="ChEBI" id="CHEBI:30616"/>
    </ligand>
</feature>
<feature type="modified residue" description="N-acetylserine" evidence="14">
    <location>
        <position position="2"/>
    </location>
</feature>
<feature type="modified residue" description="Phosphoserine" evidence="8">
    <location>
        <position position="41"/>
    </location>
</feature>
<feature type="mutagenesis site" description="Decreases ATPase activity." evidence="7">
    <original>K</original>
    <variation>A</variation>
    <location>
        <position position="254"/>
    </location>
</feature>
<feature type="mutagenesis site" description="Decreases ATPase activity." evidence="7">
    <original>E</original>
    <variation>Q</variation>
    <location>
        <position position="308"/>
    </location>
</feature>
<feature type="mutagenesis site" description="Abolishes ATPase activity." evidence="7">
    <original>K</original>
    <variation>A</variation>
    <location>
        <position position="527"/>
    </location>
</feature>
<feature type="mutagenesis site" description="Abolishes ATPase activity." evidence="7">
    <original>E</original>
    <variation>Q</variation>
    <location>
        <position position="581"/>
    </location>
</feature>
<feature type="helix" evidence="15">
    <location>
        <begin position="16"/>
        <end position="22"/>
    </location>
</feature>
<feature type="strand" evidence="15">
    <location>
        <begin position="29"/>
        <end position="33"/>
    </location>
</feature>
<feature type="strand" evidence="15">
    <location>
        <begin position="42"/>
        <end position="45"/>
    </location>
</feature>
<feature type="helix" evidence="15">
    <location>
        <begin position="47"/>
        <end position="52"/>
    </location>
</feature>
<feature type="strand" evidence="15">
    <location>
        <begin position="60"/>
        <end position="64"/>
    </location>
</feature>
<feature type="strand" evidence="15">
    <location>
        <begin position="70"/>
        <end position="77"/>
    </location>
</feature>
<feature type="strand" evidence="15">
    <location>
        <begin position="85"/>
        <end position="87"/>
    </location>
</feature>
<feature type="helix" evidence="15">
    <location>
        <begin position="90"/>
        <end position="94"/>
    </location>
</feature>
<feature type="turn" evidence="15">
    <location>
        <begin position="95"/>
        <end position="97"/>
    </location>
</feature>
<feature type="strand" evidence="15">
    <location>
        <begin position="103"/>
        <end position="108"/>
    </location>
</feature>
<feature type="strand" evidence="15">
    <location>
        <begin position="116"/>
        <end position="123"/>
    </location>
</feature>
<feature type="helix" evidence="15">
    <location>
        <begin position="124"/>
        <end position="126"/>
    </location>
</feature>
<feature type="helix" evidence="15">
    <location>
        <begin position="134"/>
        <end position="137"/>
    </location>
</feature>
<feature type="helix" evidence="15">
    <location>
        <begin position="139"/>
        <end position="143"/>
    </location>
</feature>
<feature type="turn" evidence="15">
    <location>
        <begin position="144"/>
        <end position="146"/>
    </location>
</feature>
<feature type="strand" evidence="15">
    <location>
        <begin position="148"/>
        <end position="151"/>
    </location>
</feature>
<feature type="strand" evidence="15">
    <location>
        <begin position="155"/>
        <end position="160"/>
    </location>
</feature>
<feature type="strand" evidence="15">
    <location>
        <begin position="163"/>
        <end position="180"/>
    </location>
</feature>
<feature type="strand" evidence="15">
    <location>
        <begin position="185"/>
        <end position="187"/>
    </location>
</feature>
<feature type="helix" evidence="15">
    <location>
        <begin position="206"/>
        <end position="208"/>
    </location>
</feature>
<feature type="helix" evidence="15">
    <location>
        <begin position="213"/>
        <end position="228"/>
    </location>
</feature>
<feature type="helix" evidence="15">
    <location>
        <begin position="232"/>
        <end position="235"/>
    </location>
</feature>
<feature type="strand" evidence="15">
    <location>
        <begin position="243"/>
        <end position="247"/>
    </location>
</feature>
<feature type="helix" evidence="15">
    <location>
        <begin position="254"/>
        <end position="265"/>
    </location>
</feature>
<feature type="strand" evidence="15">
    <location>
        <begin position="268"/>
        <end position="273"/>
    </location>
</feature>
<feature type="helix" evidence="15">
    <location>
        <begin position="274"/>
        <end position="278"/>
    </location>
</feature>
<feature type="helix" evidence="15">
    <location>
        <begin position="284"/>
        <end position="298"/>
    </location>
</feature>
<feature type="strand" evidence="15">
    <location>
        <begin position="301"/>
        <end position="307"/>
    </location>
</feature>
<feature type="turn" evidence="15">
    <location>
        <begin position="308"/>
        <end position="311"/>
    </location>
</feature>
<feature type="strand" evidence="15">
    <location>
        <begin position="312"/>
        <end position="314"/>
    </location>
</feature>
<feature type="turn" evidence="15">
    <location>
        <begin position="316"/>
        <end position="318"/>
    </location>
</feature>
<feature type="helix" evidence="15">
    <location>
        <begin position="322"/>
        <end position="337"/>
    </location>
</feature>
<feature type="helix" evidence="15">
    <location>
        <begin position="340"/>
        <end position="342"/>
    </location>
</feature>
<feature type="strand" evidence="15">
    <location>
        <begin position="344"/>
        <end position="351"/>
    </location>
</feature>
<feature type="turn" evidence="15">
    <location>
        <begin position="353"/>
        <end position="355"/>
    </location>
</feature>
<feature type="helix" evidence="15">
    <location>
        <begin position="358"/>
        <end position="361"/>
    </location>
</feature>
<feature type="strand" evidence="15">
    <location>
        <begin position="368"/>
        <end position="371"/>
    </location>
</feature>
<feature type="helix" evidence="15">
    <location>
        <begin position="377"/>
        <end position="386"/>
    </location>
</feature>
<feature type="turn" evidence="15">
    <location>
        <begin position="387"/>
        <end position="390"/>
    </location>
</feature>
<feature type="helix" evidence="15">
    <location>
        <begin position="399"/>
        <end position="405"/>
    </location>
</feature>
<feature type="helix" evidence="15">
    <location>
        <begin position="411"/>
        <end position="429"/>
    </location>
</feature>
<feature type="helix" evidence="15">
    <location>
        <begin position="442"/>
        <end position="445"/>
    </location>
</feature>
<feature type="helix" evidence="15">
    <location>
        <begin position="452"/>
        <end position="460"/>
    </location>
</feature>
<keyword id="KW-0002">3D-structure</keyword>
<keyword id="KW-0007">Acetylation</keyword>
<keyword id="KW-0067">ATP-binding</keyword>
<keyword id="KW-0131">Cell cycle</keyword>
<keyword id="KW-0132">Cell division</keyword>
<keyword id="KW-1003">Cell membrane</keyword>
<keyword id="KW-0963">Cytoplasm</keyword>
<keyword id="KW-0206">Cytoskeleton</keyword>
<keyword id="KW-0472">Membrane</keyword>
<keyword id="KW-0547">Nucleotide-binding</keyword>
<keyword id="KW-0539">Nucleus</keyword>
<keyword id="KW-0597">Phosphoprotein</keyword>
<keyword id="KW-0653">Protein transport</keyword>
<keyword id="KW-1185">Reference proteome</keyword>
<keyword id="KW-0677">Repeat</keyword>
<keyword id="KW-0813">Transport</keyword>
<comment type="function">
    <text evidence="1">Probably functions in cell division and growth processes. Interacts with certain SNAREs as part of specialized membrane fusion events where vesicles from the same organelle fuse (homotypic fusion) (By similarity).</text>
</comment>
<comment type="biophysicochemical properties">
    <kinetics>
        <KM evidence="4">40.5 uM for ATP (at 22 degrees Celsius)</KM>
        <Vmax evidence="4">3.47 umol/min/ug enzyme with ATP as substrate (at 22 degrees Celsius)</Vmax>
    </kinetics>
</comment>
<comment type="subunit">
    <text evidence="3 4 5 6 7 8 9 11">Homohexamer (PubMed:15498773, PubMed:17190830). Interacts with SERK1, GRF6, KAPP and SYP31, but not with KNOLLE. Component of the SERK1 signaling complex, composed of KAPP, CDC48A, GRF6 or GRF7, SERK1, SERK2, SERK3/BAK1 and BRI1 (PubMed:12427991, PubMed:15592873, PubMed:16621602, PubMed:17693538, PubMed:23747397). Interacts with PUX1, PUX2, PUX3, PUX4, PUX5, PUX7 and PUX11 via its N-terminus (PubMed:15498773, PubMed:17190830, Ref.7).</text>
</comment>
<comment type="interaction">
    <interactant intactId="EBI-1563238">
        <id>P54609</id>
    </interactant>
    <interactant intactId="EBI-1563238">
        <id>P54609</id>
        <label>CDC48A</label>
    </interactant>
    <organismsDiffer>false</organismsDiffer>
    <experiments>5</experiments>
</comment>
<comment type="interaction">
    <interactant intactId="EBI-1563238">
        <id>P54609</id>
    </interactant>
    <interactant intactId="EBI-10684297">
        <id>Q94JZ8</id>
        <label>PUX7</label>
    </interactant>
    <organismsDiffer>false</organismsDiffer>
    <experiments>3</experiments>
</comment>
<comment type="interaction">
    <interactant intactId="EBI-1563238">
        <id>P54609</id>
    </interactant>
    <interactant intactId="EBI-1555537">
        <id>Q94AG2</id>
        <label>SERK1</label>
    </interactant>
    <organismsDiffer>false</organismsDiffer>
    <experiments>12</experiments>
</comment>
<comment type="subcellular location">
    <subcellularLocation>
        <location>Nucleus</location>
    </subcellularLocation>
    <subcellularLocation>
        <location>Cytoplasm</location>
        <location>Cytoskeleton</location>
        <location>Phragmoplast</location>
    </subcellularLocation>
    <subcellularLocation>
        <location>Cell membrane</location>
        <topology>Peripheral membrane protein</topology>
    </subcellularLocation>
    <text>Primarily localized to the nucleus and, during cytokinesis, to the phragmoplast, a site where membrane vesicles are targeted in the deposition of new cell wall materials.</text>
</comment>
<comment type="developmental stage">
    <text>Highly expressed in the proliferating cells of the vegetative shoot, root, floral inflorescence and flowers, and in rapidly growing cells.</text>
</comment>
<comment type="PTM">
    <text evidence="8">Phosphorylated on at least one threonine residue and on Ser-41 by SERK1.</text>
</comment>
<comment type="similarity">
    <text evidence="12">Belongs to the AAA ATPase family.</text>
</comment>
<evidence type="ECO:0000250" key="1"/>
<evidence type="ECO:0000256" key="2">
    <source>
        <dbReference type="SAM" id="MobiDB-lite"/>
    </source>
</evidence>
<evidence type="ECO:0000269" key="3">
    <source>
    </source>
</evidence>
<evidence type="ECO:0000269" key="4">
    <source>
    </source>
</evidence>
<evidence type="ECO:0000269" key="5">
    <source>
    </source>
</evidence>
<evidence type="ECO:0000269" key="6">
    <source>
    </source>
</evidence>
<evidence type="ECO:0000269" key="7">
    <source>
    </source>
</evidence>
<evidence type="ECO:0000269" key="8">
    <source>
    </source>
</evidence>
<evidence type="ECO:0000269" key="9">
    <source>
    </source>
</evidence>
<evidence type="ECO:0000269" key="10">
    <source ref="15"/>
</evidence>
<evidence type="ECO:0000269" key="11">
    <source ref="7"/>
</evidence>
<evidence type="ECO:0000305" key="12"/>
<evidence type="ECO:0007744" key="13">
    <source>
        <dbReference type="PDB" id="6HD3"/>
    </source>
</evidence>
<evidence type="ECO:0007744" key="14">
    <source>
    </source>
</evidence>
<evidence type="ECO:0007829" key="15">
    <source>
        <dbReference type="PDB" id="6HD3"/>
    </source>
</evidence>
<name>CD48A_ARATH</name>
<sequence length="809" mass="89393">MSTPAESSDSKSKKDFSTAILERKKSPNRLVVDEAINDDNSVVSLHPATMEKLQLFRGDTILIKGKKRKDTVCIALADETCEEPKIRMNKVVRSNLRVRLGDVISVHQCPDVKYGKRVHILPVDDTVEGVTGNLFDAYLKPYFLEAYRPVRKGDLFLVRGGMRSVEFKVIETDPAEYCVVAPDTEIFCEGEPVKREDEERLDDVGYDDVGGVRKQMAQIRELVELPLRHPQLFKSIGVKPPKGILLYGPPGSGKTLIARAVANETGAFFFCINGPEIMSKLAGESESNLRKAFEEAEKNAPSIIFIDEIDSIAPKREKTNGEVERRIVSQLLTLMDGLKSRAHVIVMGATNRPNSIDPALRRFGRFDREIDIGVPDEIGRLEVLRIHTKNMKLAEDVDLERISKDTHGYVGADLAALCTEAALQCIREKMDVIDLEDDSIDAEILNSMAVTNEHFHTALGNSNPSALRETVVEVPNVSWNDIGGLENVKRELQETVQYPVEHPEKFEKFGMSPSKGVLFYGPPGCGKTLLAKAIANECQANFISVKGPELLTMWFGESEANVREIFDKARQSAPCVLFFDELDSIATQRGGGSGGDGGGAADRVLNQLLTEMDGMNAKKTVFIIGATNRPDIIDSALLRPGRLDQLIYIPLPDEDSRLNIFKAALRKSPIAKDVDIGALAKYTQGFSGADITEICQRACKYAIRENIEKDIEKEKRRSENPEAMEEDGVDEVSEIKAAHFEESMKYARRSVSDADIRKYQAFAQTLQQSRGFGSEFRFENSAGSGATTGVADPFATSAAAAGDDDDLYN</sequence>
<proteinExistence type="evidence at protein level"/>
<protein>
    <recommendedName>
        <fullName>Cell division control protein 48 homolog A</fullName>
        <shortName>AtCDC48a</shortName>
    </recommendedName>
</protein>
<organism>
    <name type="scientific">Arabidopsis thaliana</name>
    <name type="common">Mouse-ear cress</name>
    <dbReference type="NCBI Taxonomy" id="3702"/>
    <lineage>
        <taxon>Eukaryota</taxon>
        <taxon>Viridiplantae</taxon>
        <taxon>Streptophyta</taxon>
        <taxon>Embryophyta</taxon>
        <taxon>Tracheophyta</taxon>
        <taxon>Spermatophyta</taxon>
        <taxon>Magnoliopsida</taxon>
        <taxon>eudicotyledons</taxon>
        <taxon>Gunneridae</taxon>
        <taxon>Pentapetalae</taxon>
        <taxon>rosids</taxon>
        <taxon>malvids</taxon>
        <taxon>Brassicales</taxon>
        <taxon>Brassicaceae</taxon>
        <taxon>Camelineae</taxon>
        <taxon>Arabidopsis</taxon>
    </lineage>
</organism>
<reference key="1">
    <citation type="journal article" date="1995" name="EMBO J.">
        <title>The higher plant Arabidopsis thaliana encodes a functional CDC48 homologue which is highly expressed in dividing and expanding cells.</title>
        <authorList>
            <person name="Feiler H.S."/>
            <person name="Desprez T."/>
            <person name="Santoni V."/>
            <person name="Kronenberger J."/>
            <person name="Caboche M."/>
            <person name="Traas J."/>
        </authorList>
    </citation>
    <scope>NUCLEOTIDE SEQUENCE [MRNA]</scope>
    <source>
        <strain>cv. Columbia</strain>
    </source>
</reference>
<reference key="2">
    <citation type="journal article" date="2000" name="Nature">
        <title>Sequence and analysis of chromosome 3 of the plant Arabidopsis thaliana.</title>
        <authorList>
            <person name="Salanoubat M."/>
            <person name="Lemcke K."/>
            <person name="Rieger M."/>
            <person name="Ansorge W."/>
            <person name="Unseld M."/>
            <person name="Fartmann B."/>
            <person name="Valle G."/>
            <person name="Bloecker H."/>
            <person name="Perez-Alonso M."/>
            <person name="Obermaier B."/>
            <person name="Delseny M."/>
            <person name="Boutry M."/>
            <person name="Grivell L.A."/>
            <person name="Mache R."/>
            <person name="Puigdomenech P."/>
            <person name="De Simone V."/>
            <person name="Choisne N."/>
            <person name="Artiguenave F."/>
            <person name="Robert C."/>
            <person name="Brottier P."/>
            <person name="Wincker P."/>
            <person name="Cattolico L."/>
            <person name="Weissenbach J."/>
            <person name="Saurin W."/>
            <person name="Quetier F."/>
            <person name="Schaefer M."/>
            <person name="Mueller-Auer S."/>
            <person name="Gabel C."/>
            <person name="Fuchs M."/>
            <person name="Benes V."/>
            <person name="Wurmbach E."/>
            <person name="Drzonek H."/>
            <person name="Erfle H."/>
            <person name="Jordan N."/>
            <person name="Bangert S."/>
            <person name="Wiedelmann R."/>
            <person name="Kranz H."/>
            <person name="Voss H."/>
            <person name="Holland R."/>
            <person name="Brandt P."/>
            <person name="Nyakatura G."/>
            <person name="Vezzi A."/>
            <person name="D'Angelo M."/>
            <person name="Pallavicini A."/>
            <person name="Toppo S."/>
            <person name="Simionati B."/>
            <person name="Conrad A."/>
            <person name="Hornischer K."/>
            <person name="Kauer G."/>
            <person name="Loehnert T.-H."/>
            <person name="Nordsiek G."/>
            <person name="Reichelt J."/>
            <person name="Scharfe M."/>
            <person name="Schoen O."/>
            <person name="Bargues M."/>
            <person name="Terol J."/>
            <person name="Climent J."/>
            <person name="Navarro P."/>
            <person name="Collado C."/>
            <person name="Perez-Perez A."/>
            <person name="Ottenwaelder B."/>
            <person name="Duchemin D."/>
            <person name="Cooke R."/>
            <person name="Laudie M."/>
            <person name="Berger-Llauro C."/>
            <person name="Purnelle B."/>
            <person name="Masuy D."/>
            <person name="de Haan M."/>
            <person name="Maarse A.C."/>
            <person name="Alcaraz J.-P."/>
            <person name="Cottet A."/>
            <person name="Casacuberta E."/>
            <person name="Monfort A."/>
            <person name="Argiriou A."/>
            <person name="Flores M."/>
            <person name="Liguori R."/>
            <person name="Vitale D."/>
            <person name="Mannhaupt G."/>
            <person name="Haase D."/>
            <person name="Schoof H."/>
            <person name="Rudd S."/>
            <person name="Zaccaria P."/>
            <person name="Mewes H.-W."/>
            <person name="Mayer K.F.X."/>
            <person name="Kaul S."/>
            <person name="Town C.D."/>
            <person name="Koo H.L."/>
            <person name="Tallon L.J."/>
            <person name="Jenkins J."/>
            <person name="Rooney T."/>
            <person name="Rizzo M."/>
            <person name="Walts A."/>
            <person name="Utterback T."/>
            <person name="Fujii C.Y."/>
            <person name="Shea T.P."/>
            <person name="Creasy T.H."/>
            <person name="Haas B."/>
            <person name="Maiti R."/>
            <person name="Wu D."/>
            <person name="Peterson J."/>
            <person name="Van Aken S."/>
            <person name="Pai G."/>
            <person name="Militscher J."/>
            <person name="Sellers P."/>
            <person name="Gill J.E."/>
            <person name="Feldblyum T.V."/>
            <person name="Preuss D."/>
            <person name="Lin X."/>
            <person name="Nierman W.C."/>
            <person name="Salzberg S.L."/>
            <person name="White O."/>
            <person name="Venter J.C."/>
            <person name="Fraser C.M."/>
            <person name="Kaneko T."/>
            <person name="Nakamura Y."/>
            <person name="Sato S."/>
            <person name="Kato T."/>
            <person name="Asamizu E."/>
            <person name="Sasamoto S."/>
            <person name="Kimura T."/>
            <person name="Idesawa K."/>
            <person name="Kawashima K."/>
            <person name="Kishida Y."/>
            <person name="Kiyokawa C."/>
            <person name="Kohara M."/>
            <person name="Matsumoto M."/>
            <person name="Matsuno A."/>
            <person name="Muraki A."/>
            <person name="Nakayama S."/>
            <person name="Nakazaki N."/>
            <person name="Shinpo S."/>
            <person name="Takeuchi C."/>
            <person name="Wada T."/>
            <person name="Watanabe A."/>
            <person name="Yamada M."/>
            <person name="Yasuda M."/>
            <person name="Tabata S."/>
        </authorList>
    </citation>
    <scope>NUCLEOTIDE SEQUENCE [LARGE SCALE GENOMIC DNA]</scope>
    <source>
        <strain>cv. Columbia</strain>
    </source>
</reference>
<reference key="3">
    <citation type="journal article" date="2017" name="Plant J.">
        <title>Araport11: a complete reannotation of the Arabidopsis thaliana reference genome.</title>
        <authorList>
            <person name="Cheng C.Y."/>
            <person name="Krishnakumar V."/>
            <person name="Chan A.P."/>
            <person name="Thibaud-Nissen F."/>
            <person name="Schobel S."/>
            <person name="Town C.D."/>
        </authorList>
    </citation>
    <scope>GENOME REANNOTATION</scope>
    <source>
        <strain>cv. Columbia</strain>
    </source>
</reference>
<reference key="4">
    <citation type="journal article" date="2003" name="Science">
        <title>Empirical analysis of transcriptional activity in the Arabidopsis genome.</title>
        <authorList>
            <person name="Yamada K."/>
            <person name="Lim J."/>
            <person name="Dale J.M."/>
            <person name="Chen H."/>
            <person name="Shinn P."/>
            <person name="Palm C.J."/>
            <person name="Southwick A.M."/>
            <person name="Wu H.C."/>
            <person name="Kim C.J."/>
            <person name="Nguyen M."/>
            <person name="Pham P.K."/>
            <person name="Cheuk R.F."/>
            <person name="Karlin-Newmann G."/>
            <person name="Liu S.X."/>
            <person name="Lam B."/>
            <person name="Sakano H."/>
            <person name="Wu T."/>
            <person name="Yu G."/>
            <person name="Miranda M."/>
            <person name="Quach H.L."/>
            <person name="Tripp M."/>
            <person name="Chang C.H."/>
            <person name="Lee J.M."/>
            <person name="Toriumi M.J."/>
            <person name="Chan M.M."/>
            <person name="Tang C.C."/>
            <person name="Onodera C.S."/>
            <person name="Deng J.M."/>
            <person name="Akiyama K."/>
            <person name="Ansari Y."/>
            <person name="Arakawa T."/>
            <person name="Banh J."/>
            <person name="Banno F."/>
            <person name="Bowser L."/>
            <person name="Brooks S.Y."/>
            <person name="Carninci P."/>
            <person name="Chao Q."/>
            <person name="Choy N."/>
            <person name="Enju A."/>
            <person name="Goldsmith A.D."/>
            <person name="Gurjal M."/>
            <person name="Hansen N.F."/>
            <person name="Hayashizaki Y."/>
            <person name="Johnson-Hopson C."/>
            <person name="Hsuan V.W."/>
            <person name="Iida K."/>
            <person name="Karnes M."/>
            <person name="Khan S."/>
            <person name="Koesema E."/>
            <person name="Ishida J."/>
            <person name="Jiang P.X."/>
            <person name="Jones T."/>
            <person name="Kawai J."/>
            <person name="Kamiya A."/>
            <person name="Meyers C."/>
            <person name="Nakajima M."/>
            <person name="Narusaka M."/>
            <person name="Seki M."/>
            <person name="Sakurai T."/>
            <person name="Satou M."/>
            <person name="Tamse R."/>
            <person name="Vaysberg M."/>
            <person name="Wallender E.K."/>
            <person name="Wong C."/>
            <person name="Yamamura Y."/>
            <person name="Yuan S."/>
            <person name="Shinozaki K."/>
            <person name="Davis R.W."/>
            <person name="Theologis A."/>
            <person name="Ecker J.R."/>
        </authorList>
    </citation>
    <scope>NUCLEOTIDE SEQUENCE [LARGE SCALE MRNA]</scope>
    <source>
        <strain>cv. Columbia</strain>
    </source>
</reference>
<reference key="5">
    <citation type="journal article" date="2002" name="Plant Physiol.">
        <title>Characterization of AtCDC48. Evidence for multiple membrane fusion mechanisms at the plane of cell division in plants.</title>
        <authorList>
            <person name="Rancour D.M."/>
            <person name="Dickey C.E."/>
            <person name="Park S."/>
            <person name="Bednarek S.Y."/>
        </authorList>
    </citation>
    <scope>SUBCELLULAR LOCATION</scope>
    <scope>INTERACTION WITH SYP31 AND KNOLLE</scope>
    <scope>SUBUNIT</scope>
</reference>
<reference key="6">
    <citation type="journal article" date="2004" name="J. Biol. Chem.">
        <title>Plant UBX domain-containing protein 1, PUX1, regulates the oligomeric structure and activity of arabidopsis CDC48.</title>
        <authorList>
            <person name="Rancour D.M."/>
            <person name="Park S."/>
            <person name="Knight S.D."/>
            <person name="Bednarek S.Y."/>
        </authorList>
    </citation>
    <scope>INTERACTION WITH PUX1</scope>
    <scope>SUBUNIT</scope>
    <scope>BIOPHYSICOCHEMICAL PROPERTIES</scope>
    <source>
        <strain>cv. Columbia</strain>
    </source>
</reference>
<reference key="7">
    <citation type="book" date="2005" name="Proceedings of the 16th international conference on Arabidopsis research">
        <title>The plant UBX-domain containing (PUX) protein family regulates the function of Arabidopsis CDC48, a conserved essential AAA-ATPase.</title>
        <authorList>
            <person name="Posthuma R."/>
            <person name="Rancour D."/>
            <person name="Park S."/>
            <person name="Bates B."/>
            <person name="Bednarek S."/>
        </authorList>
    </citation>
    <scope>INTERACTION WITH PUX1; PUX2; PUX3; PUX4 AND PUX11</scope>
</reference>
<reference key="8">
    <citation type="journal article" date="2005" name="Planta">
        <title>The Arabidopsis SERK1 protein interacts with the AAA-ATPase AtCDC48, the 14-3-3 protein GF14lambda and the PP2C phosphatase KAPP.</title>
        <authorList>
            <person name="Rienties I.M."/>
            <person name="Vink J."/>
            <person name="Borst J.W."/>
            <person name="Russinova E."/>
            <person name="de Vries S.C."/>
        </authorList>
    </citation>
    <scope>INTERACTION WITH SERK1; GRF6 AND KAPP</scope>
    <scope>SUBUNIT</scope>
    <scope>IDENTIFICATION IN THE SERK1 COMPLEX</scope>
</reference>
<reference key="9">
    <citation type="journal article" date="2006" name="J. Struct. Biol.">
        <title>The Arabidopsis thaliana AAA protein CDC48A interacts in vivo with the somatic embryogenesis receptor-like kinase 1 receptor at the plasma membrane.</title>
        <authorList>
            <person name="Aker J."/>
            <person name="Borst J.W."/>
            <person name="Karlova R."/>
            <person name="de Vries S.C."/>
        </authorList>
    </citation>
    <scope>SUBCELLULAR LOCATION</scope>
    <scope>INTERACTION WITH SERK1</scope>
</reference>
<reference key="10">
    <citation type="journal article" date="2007" name="J. Biol. Chem.">
        <title>Protein domain-domain interactions and requirements for the negative regulation of Arabidopsis CDC48/p97 by the plant ubiquitin regulatory X (UBX) domain-containing protein, PUX1.</title>
        <authorList>
            <person name="Park S."/>
            <person name="Rancour D.M."/>
            <person name="Bednarek S.Y."/>
        </authorList>
    </citation>
    <scope>INTERACTION WITH PUX1; PUX4 AND PUX5</scope>
    <scope>MUTAGENESIS OF LYS-254; GLU-308; LYS-527 AND GLU-581</scope>
    <scope>SUBUNIT</scope>
</reference>
<reference key="11">
    <citation type="journal article" date="2007" name="Mol. Cell. Proteomics">
        <title>Multidimensional protein identification technology (MudPIT) analysis of ubiquitinated proteins in plants.</title>
        <authorList>
            <person name="Maor R."/>
            <person name="Jones A."/>
            <person name="Nuehse T.S."/>
            <person name="Studholme D.J."/>
            <person name="Peck S.C."/>
            <person name="Shirasu K."/>
        </authorList>
    </citation>
    <scope>IDENTIFICATION BY MASS SPECTROMETRY [LARGE SCALE ANALYSIS]</scope>
    <source>
        <strain>cv. Landsberg erecta</strain>
    </source>
</reference>
<reference key="12">
    <citation type="journal article" date="2007" name="Plant Physiol.">
        <title>In vivo hexamerization and characterization of the Arabidopsis AAA ATPase CDC48A complex using forster resonance energy transfer-fluorescence lifetime imaging microscopy and fluorescence correlation spectroscopy.</title>
        <authorList>
            <person name="Aker J."/>
            <person name="Hesselink R."/>
            <person name="Engel R."/>
            <person name="Karlova R."/>
            <person name="Borst J.W."/>
            <person name="Visser A.J.W.G."/>
            <person name="de Vries S.C."/>
        </authorList>
    </citation>
    <scope>SUBUNIT</scope>
    <scope>INTERACTION WITH SERK1</scope>
    <scope>PHOSPHORYLATION AT SER-41</scope>
</reference>
<reference key="13">
    <citation type="journal article" date="2012" name="Mol. Cell. Proteomics">
        <title>Comparative large-scale characterisation of plant vs. mammal proteins reveals similar and idiosyncratic N-alpha acetylation features.</title>
        <authorList>
            <person name="Bienvenut W.V."/>
            <person name="Sumpton D."/>
            <person name="Martinez A."/>
            <person name="Lilla S."/>
            <person name="Espagne C."/>
            <person name="Meinnel T."/>
            <person name="Giglione C."/>
        </authorList>
    </citation>
    <scope>ACETYLATION [LARGE SCALE ANALYSIS] AT SER-2</scope>
    <scope>CLEAVAGE OF INITIATOR METHIONINE [LARGE SCALE ANALYSIS]</scope>
    <scope>IDENTIFICATION BY MASS SPECTROMETRY [LARGE SCALE ANALYSIS]</scope>
</reference>
<reference key="14">
    <citation type="journal article" date="2013" name="Gene">
        <title>Functional characterization of the plant ubiquitin regulatory X (UBX) domain-containing protein AtPUX7 in Arabidopsis thaliana.</title>
        <authorList>
            <person name="Gallois J.L."/>
            <person name="Drouaud J."/>
            <person name="Lecureuil A."/>
            <person name="Guyon-Debast A."/>
            <person name="Bonhomme S."/>
            <person name="Guerche P."/>
        </authorList>
    </citation>
    <scope>INTERACTION WITH PUX7</scope>
</reference>
<reference key="15">
    <citation type="submission" date="2018-08" db="PDB data bank">
        <title>Common mode of remodeling AAA ATPases p97/CDC48 by their disassembly cofactors ASPL/PUX1.</title>
        <authorList>
            <person name="Heinemann U."/>
            <person name="Roske Y."/>
            <person name="Banchenko S."/>
            <person name="Arumughan A."/>
            <person name="Wanker E."/>
            <person name="Petrovic S."/>
        </authorList>
    </citation>
    <scope>X-RAY CRYSTALLOGRAPHY (2.80 ANGSTROMS) OF 1-481 IN COMPLEX WITH ADP</scope>
</reference>
<accession>P54609</accession>
<gene>
    <name type="primary">CDC48A</name>
    <name type="synonym">CDC48</name>
    <name type="ordered locus">At3g09840</name>
    <name type="ORF">F8A24.11</name>
</gene>